<name>PQQE_ACIBY</name>
<sequence length="384" mass="43909">MTEGVGLPLWLLAELTYRCPLQCPYCSNPLDYAQHKNELTTQEWFDVFDQARQMGAVQLGFSGGEPLVRQDLEQLVAHAHQLGFYTNLITSGMGLTEQRISHLKQAGLDHIQISFQASDPVVNDALAGSKHAFEQKYEMCRLVKKYDYPMVLNFVIHRHNIDQIDKIIELCLELNADTVELAICQFYGWAFLNRQGLLPTQEQLIRAERITNEYREKLKAQNHPCKLIFVVPDYYEERPKACMNGWGKIFFTVAPDGMALPCHAARQLPISFPNVREQSLSRIWYESTGFNHFRGDAWMPEGCRSCPDKDRDFGGCRCQAYMLTGNASNADPVCGKSPYHQFIEQARAESEIDSSLEKLVFRNSRNSKQFTVQQNIPVQNIVDD</sequence>
<feature type="chain" id="PRO_1000131274" description="PqqA peptide cyclase">
    <location>
        <begin position="1"/>
        <end position="384"/>
    </location>
</feature>
<feature type="domain" description="Radical SAM core" evidence="2">
    <location>
        <begin position="5"/>
        <end position="220"/>
    </location>
</feature>
<feature type="binding site" evidence="1">
    <location>
        <position position="19"/>
    </location>
    <ligand>
        <name>[4Fe-4S] cluster</name>
        <dbReference type="ChEBI" id="CHEBI:49883"/>
        <note>4Fe-4S-S-AdoMet</note>
    </ligand>
</feature>
<feature type="binding site" evidence="1">
    <location>
        <position position="23"/>
    </location>
    <ligand>
        <name>[4Fe-4S] cluster</name>
        <dbReference type="ChEBI" id="CHEBI:49883"/>
        <note>4Fe-4S-S-AdoMet</note>
    </ligand>
</feature>
<feature type="binding site" evidence="1">
    <location>
        <position position="26"/>
    </location>
    <ligand>
        <name>[4Fe-4S] cluster</name>
        <dbReference type="ChEBI" id="CHEBI:49883"/>
        <note>4Fe-4S-S-AdoMet</note>
    </ligand>
</feature>
<proteinExistence type="inferred from homology"/>
<reference key="1">
    <citation type="journal article" date="2008" name="PLoS ONE">
        <title>Comparative analysis of Acinetobacters: three genomes for three lifestyles.</title>
        <authorList>
            <person name="Vallenet D."/>
            <person name="Nordmann P."/>
            <person name="Barbe V."/>
            <person name="Poirel L."/>
            <person name="Mangenot S."/>
            <person name="Bataille E."/>
            <person name="Dossat C."/>
            <person name="Gas S."/>
            <person name="Kreimeyer A."/>
            <person name="Lenoble P."/>
            <person name="Oztas S."/>
            <person name="Poulain J."/>
            <person name="Segurens B."/>
            <person name="Robert C."/>
            <person name="Abergel C."/>
            <person name="Claverie J.-M."/>
            <person name="Raoult D."/>
            <person name="Medigue C."/>
            <person name="Weissenbach J."/>
            <person name="Cruveiller S."/>
        </authorList>
    </citation>
    <scope>NUCLEOTIDE SEQUENCE [LARGE SCALE GENOMIC DNA]</scope>
    <source>
        <strain>AYE</strain>
    </source>
</reference>
<comment type="function">
    <text evidence="1">Catalyzes the cross-linking of a glutamate residue and a tyrosine residue in the PqqA protein as part of the biosynthesis of pyrroloquinoline quinone (PQQ).</text>
</comment>
<comment type="catalytic activity">
    <reaction evidence="1">
        <text>[PQQ precursor protein] + S-adenosyl-L-methionine = E-Y cross-linked-[PQQ precursor protein] + 5'-deoxyadenosine + L-methionine + H(+)</text>
        <dbReference type="Rhea" id="RHEA:56836"/>
        <dbReference type="Rhea" id="RHEA-COMP:14800"/>
        <dbReference type="Rhea" id="RHEA-COMP:14801"/>
        <dbReference type="ChEBI" id="CHEBI:15378"/>
        <dbReference type="ChEBI" id="CHEBI:17319"/>
        <dbReference type="ChEBI" id="CHEBI:57844"/>
        <dbReference type="ChEBI" id="CHEBI:59789"/>
        <dbReference type="ChEBI" id="CHEBI:141026"/>
        <dbReference type="ChEBI" id="CHEBI:141027"/>
        <dbReference type="EC" id="1.21.98.4"/>
    </reaction>
</comment>
<comment type="cofactor">
    <cofactor evidence="1">
        <name>[4Fe-4S] cluster</name>
        <dbReference type="ChEBI" id="CHEBI:49883"/>
    </cofactor>
    <text evidence="1">Binds 1 [4Fe-4S] cluster. The cluster is coordinated with 3 cysteines and an exchangeable S-adenosyl-L-methionine.</text>
</comment>
<comment type="pathway">
    <text evidence="1">Cofactor biosynthesis; pyrroloquinoline quinone biosynthesis.</text>
</comment>
<comment type="subunit">
    <text evidence="1">Interacts with PqqD. The interaction is necessary for activity of PqqE.</text>
</comment>
<comment type="similarity">
    <text evidence="1">Belongs to the radical SAM superfamily. PqqE family.</text>
</comment>
<organism>
    <name type="scientific">Acinetobacter baumannii (strain AYE)</name>
    <dbReference type="NCBI Taxonomy" id="509173"/>
    <lineage>
        <taxon>Bacteria</taxon>
        <taxon>Pseudomonadati</taxon>
        <taxon>Pseudomonadota</taxon>
        <taxon>Gammaproteobacteria</taxon>
        <taxon>Moraxellales</taxon>
        <taxon>Moraxellaceae</taxon>
        <taxon>Acinetobacter</taxon>
        <taxon>Acinetobacter calcoaceticus/baumannii complex</taxon>
    </lineage>
</organism>
<dbReference type="EC" id="1.21.98.4" evidence="1"/>
<dbReference type="EMBL" id="CU459141">
    <property type="protein sequence ID" value="CAM86760.1"/>
    <property type="molecule type" value="Genomic_DNA"/>
</dbReference>
<dbReference type="RefSeq" id="WP_000134724.1">
    <property type="nucleotide sequence ID" value="NZ_JBDGFB010000001.1"/>
</dbReference>
<dbReference type="SMR" id="B0V494"/>
<dbReference type="EnsemblBacteria" id="CAM86760">
    <property type="protein sequence ID" value="CAM86760"/>
    <property type="gene ID" value="ABAYE1878"/>
</dbReference>
<dbReference type="KEGG" id="aby:ABAYE1878"/>
<dbReference type="HOGENOM" id="CLU_009273_4_7_6"/>
<dbReference type="UniPathway" id="UPA00539"/>
<dbReference type="GO" id="GO:0051539">
    <property type="term" value="F:4 iron, 4 sulfur cluster binding"/>
    <property type="evidence" value="ECO:0007669"/>
    <property type="project" value="UniProtKB-KW"/>
</dbReference>
<dbReference type="GO" id="GO:0009975">
    <property type="term" value="F:cyclase activity"/>
    <property type="evidence" value="ECO:0007669"/>
    <property type="project" value="UniProtKB-UniRule"/>
</dbReference>
<dbReference type="GO" id="GO:0005506">
    <property type="term" value="F:iron ion binding"/>
    <property type="evidence" value="ECO:0007669"/>
    <property type="project" value="UniProtKB-UniRule"/>
</dbReference>
<dbReference type="GO" id="GO:0016491">
    <property type="term" value="F:oxidoreductase activity"/>
    <property type="evidence" value="ECO:0007669"/>
    <property type="project" value="UniProtKB-KW"/>
</dbReference>
<dbReference type="GO" id="GO:1904047">
    <property type="term" value="F:S-adenosyl-L-methionine binding"/>
    <property type="evidence" value="ECO:0007669"/>
    <property type="project" value="UniProtKB-UniRule"/>
</dbReference>
<dbReference type="GO" id="GO:0018189">
    <property type="term" value="P:pyrroloquinoline quinone biosynthetic process"/>
    <property type="evidence" value="ECO:0007669"/>
    <property type="project" value="UniProtKB-UniRule"/>
</dbReference>
<dbReference type="CDD" id="cd01335">
    <property type="entry name" value="Radical_SAM"/>
    <property type="match status" value="1"/>
</dbReference>
<dbReference type="CDD" id="cd21119">
    <property type="entry name" value="SPASM_PqqE"/>
    <property type="match status" value="1"/>
</dbReference>
<dbReference type="Gene3D" id="3.20.20.70">
    <property type="entry name" value="Aldolase class I"/>
    <property type="match status" value="1"/>
</dbReference>
<dbReference type="HAMAP" id="MF_00660">
    <property type="entry name" value="PqqE"/>
    <property type="match status" value="1"/>
</dbReference>
<dbReference type="InterPro" id="IPR023885">
    <property type="entry name" value="4Fe4S-binding_SPASM_dom"/>
</dbReference>
<dbReference type="InterPro" id="IPR013785">
    <property type="entry name" value="Aldolase_TIM"/>
</dbReference>
<dbReference type="InterPro" id="IPR006638">
    <property type="entry name" value="Elp3/MiaA/NifB-like_rSAM"/>
</dbReference>
<dbReference type="InterPro" id="IPR000385">
    <property type="entry name" value="MoaA_NifB_PqqE_Fe-S-bd_CS"/>
</dbReference>
<dbReference type="InterPro" id="IPR011843">
    <property type="entry name" value="PQQ_synth_PqqE_bac"/>
</dbReference>
<dbReference type="InterPro" id="IPR017200">
    <property type="entry name" value="PqqE-like"/>
</dbReference>
<dbReference type="InterPro" id="IPR050377">
    <property type="entry name" value="Radical_SAM_PqqE_MftC-like"/>
</dbReference>
<dbReference type="InterPro" id="IPR007197">
    <property type="entry name" value="rSAM"/>
</dbReference>
<dbReference type="NCBIfam" id="TIGR02109">
    <property type="entry name" value="PQQ_syn_pqqE"/>
    <property type="match status" value="1"/>
</dbReference>
<dbReference type="NCBIfam" id="TIGR04085">
    <property type="entry name" value="rSAM_more_4Fe4S"/>
    <property type="match status" value="1"/>
</dbReference>
<dbReference type="PANTHER" id="PTHR11228:SF7">
    <property type="entry name" value="PQQA PEPTIDE CYCLASE"/>
    <property type="match status" value="1"/>
</dbReference>
<dbReference type="PANTHER" id="PTHR11228">
    <property type="entry name" value="RADICAL SAM DOMAIN PROTEIN"/>
    <property type="match status" value="1"/>
</dbReference>
<dbReference type="Pfam" id="PF13353">
    <property type="entry name" value="Fer4_12"/>
    <property type="match status" value="1"/>
</dbReference>
<dbReference type="Pfam" id="PF04055">
    <property type="entry name" value="Radical_SAM"/>
    <property type="match status" value="1"/>
</dbReference>
<dbReference type="Pfam" id="PF13186">
    <property type="entry name" value="SPASM"/>
    <property type="match status" value="1"/>
</dbReference>
<dbReference type="PIRSF" id="PIRSF037420">
    <property type="entry name" value="PQQ_syn_pqqE"/>
    <property type="match status" value="1"/>
</dbReference>
<dbReference type="SFLD" id="SFLDF00280">
    <property type="entry name" value="coenzyme_PQQ_synthesis_protein"/>
    <property type="match status" value="1"/>
</dbReference>
<dbReference type="SFLD" id="SFLDS00029">
    <property type="entry name" value="Radical_SAM"/>
    <property type="match status" value="1"/>
</dbReference>
<dbReference type="SMART" id="SM00729">
    <property type="entry name" value="Elp3"/>
    <property type="match status" value="1"/>
</dbReference>
<dbReference type="SUPFAM" id="SSF102114">
    <property type="entry name" value="Radical SAM enzymes"/>
    <property type="match status" value="1"/>
</dbReference>
<dbReference type="PROSITE" id="PS01305">
    <property type="entry name" value="MOAA_NIFB_PQQE"/>
    <property type="match status" value="1"/>
</dbReference>
<dbReference type="PROSITE" id="PS51918">
    <property type="entry name" value="RADICAL_SAM"/>
    <property type="match status" value="1"/>
</dbReference>
<evidence type="ECO:0000255" key="1">
    <source>
        <dbReference type="HAMAP-Rule" id="MF_00660"/>
    </source>
</evidence>
<evidence type="ECO:0000255" key="2">
    <source>
        <dbReference type="PROSITE-ProRule" id="PRU01266"/>
    </source>
</evidence>
<gene>
    <name evidence="1" type="primary">pqqE</name>
    <name type="ordered locus">ABAYE1878</name>
</gene>
<keyword id="KW-0004">4Fe-4S</keyword>
<keyword id="KW-0408">Iron</keyword>
<keyword id="KW-0411">Iron-sulfur</keyword>
<keyword id="KW-0479">Metal-binding</keyword>
<keyword id="KW-0560">Oxidoreductase</keyword>
<keyword id="KW-0884">PQQ biosynthesis</keyword>
<keyword id="KW-0949">S-adenosyl-L-methionine</keyword>
<protein>
    <recommendedName>
        <fullName evidence="1">PqqA peptide cyclase</fullName>
        <ecNumber evidence="1">1.21.98.4</ecNumber>
    </recommendedName>
    <alternativeName>
        <fullName evidence="1">Coenzyme PQQ synthesis protein E</fullName>
    </alternativeName>
    <alternativeName>
        <fullName evidence="1">Pyrroloquinoline quinone biosynthesis protein E</fullName>
    </alternativeName>
</protein>
<accession>B0V494</accession>